<sequence>MRFDTIIMGGGLAGLLCGLQLQKHGLRCAIVTRGQSALHFSSGSLDLLSHLPDGQAVTDIHSGLESLRQQAPAHPYSLLGPQRVLDLACQAQALIAESGAQLQGSVELPHQRITPLGTLRSTWLSSPEVPVWPLPAKKICVVGISGLMDFQAHLAAASLRELDLAVETAEIELPELDVLRNNATEFRAVNIARFLDNEENWPLLLDALIPVANTCEMILMPACFGLADDKLWRWLNEKLPCSLMLLPTLPPSVLGIRLQNQLQRQFVRQGGVWMPGDEVKKVTCKNGVVNEIWTRNHADIPLRPRFAVLASGSFFSGGLVAERNGIREPILGLDVLQTATRGEWYKGDFFAPQPWQQFGVTTDQTLRPSQAGQTIENLFTIGSVLGGFDPIAQGCGGGVCAVSALHAAQQIAQRAGGQQ</sequence>
<proteinExistence type="inferred from homology"/>
<accession>Q8XE13</accession>
<dbReference type="EC" id="1.1.5.3" evidence="2"/>
<dbReference type="EMBL" id="AE005174">
    <property type="protein sequence ID" value="AAG57373.1"/>
    <property type="molecule type" value="Genomic_DNA"/>
</dbReference>
<dbReference type="EMBL" id="BA000007">
    <property type="protein sequence ID" value="BAB36550.1"/>
    <property type="molecule type" value="Genomic_DNA"/>
</dbReference>
<dbReference type="PIR" id="A85864">
    <property type="entry name" value="A85864"/>
</dbReference>
<dbReference type="PIR" id="G91019">
    <property type="entry name" value="G91019"/>
</dbReference>
<dbReference type="RefSeq" id="NP_311154.1">
    <property type="nucleotide sequence ID" value="NC_002695.1"/>
</dbReference>
<dbReference type="RefSeq" id="WP_001209872.1">
    <property type="nucleotide sequence ID" value="NZ_VOAI01000001.1"/>
</dbReference>
<dbReference type="STRING" id="155864.Z3500"/>
<dbReference type="GeneID" id="916835"/>
<dbReference type="KEGG" id="ece:Z3500"/>
<dbReference type="KEGG" id="ecs:ECs_3127"/>
<dbReference type="PATRIC" id="fig|386585.9.peg.3261"/>
<dbReference type="eggNOG" id="COG3075">
    <property type="taxonomic scope" value="Bacteria"/>
</dbReference>
<dbReference type="HOGENOM" id="CLU_047793_0_0_6"/>
<dbReference type="OMA" id="CFGLENQ"/>
<dbReference type="UniPathway" id="UPA00618">
    <property type="reaction ID" value="UER00673"/>
</dbReference>
<dbReference type="Proteomes" id="UP000000558">
    <property type="component" value="Chromosome"/>
</dbReference>
<dbReference type="Proteomes" id="UP000002519">
    <property type="component" value="Chromosome"/>
</dbReference>
<dbReference type="GO" id="GO:0009331">
    <property type="term" value="C:glycerol-3-phosphate dehydrogenase (FAD) complex"/>
    <property type="evidence" value="ECO:0007669"/>
    <property type="project" value="InterPro"/>
</dbReference>
<dbReference type="GO" id="GO:0005886">
    <property type="term" value="C:plasma membrane"/>
    <property type="evidence" value="ECO:0007669"/>
    <property type="project" value="UniProtKB-SubCell"/>
</dbReference>
<dbReference type="GO" id="GO:0004368">
    <property type="term" value="F:glycerol-3-phosphate dehydrogenase (quinone) activity"/>
    <property type="evidence" value="ECO:0007669"/>
    <property type="project" value="UniProtKB-UniRule"/>
</dbReference>
<dbReference type="GO" id="GO:0009061">
    <property type="term" value="P:anaerobic respiration"/>
    <property type="evidence" value="ECO:0007669"/>
    <property type="project" value="TreeGrafter"/>
</dbReference>
<dbReference type="GO" id="GO:0019563">
    <property type="term" value="P:glycerol catabolic process"/>
    <property type="evidence" value="ECO:0007669"/>
    <property type="project" value="UniProtKB-UniRule"/>
</dbReference>
<dbReference type="GO" id="GO:0046168">
    <property type="term" value="P:glycerol-3-phosphate catabolic process"/>
    <property type="evidence" value="ECO:0007669"/>
    <property type="project" value="TreeGrafter"/>
</dbReference>
<dbReference type="Gene3D" id="3.50.50.60">
    <property type="entry name" value="FAD/NAD(P)-binding domain"/>
    <property type="match status" value="1"/>
</dbReference>
<dbReference type="HAMAP" id="MF_00753">
    <property type="entry name" value="Glycerol3P_GlpB"/>
    <property type="match status" value="1"/>
</dbReference>
<dbReference type="InterPro" id="IPR003953">
    <property type="entry name" value="FAD-dep_OxRdtase_2_FAD-bd"/>
</dbReference>
<dbReference type="InterPro" id="IPR050315">
    <property type="entry name" value="FAD-oxidoreductase_2"/>
</dbReference>
<dbReference type="InterPro" id="IPR036188">
    <property type="entry name" value="FAD/NAD-bd_sf"/>
</dbReference>
<dbReference type="InterPro" id="IPR009158">
    <property type="entry name" value="G3P_DH_GlpB_su"/>
</dbReference>
<dbReference type="NCBIfam" id="TIGR03378">
    <property type="entry name" value="glycerol3P_GlpB"/>
    <property type="match status" value="1"/>
</dbReference>
<dbReference type="NCBIfam" id="NF003718">
    <property type="entry name" value="PRK05329.1-1"/>
    <property type="match status" value="1"/>
</dbReference>
<dbReference type="NCBIfam" id="NF003719">
    <property type="entry name" value="PRK05329.1-2"/>
    <property type="match status" value="1"/>
</dbReference>
<dbReference type="NCBIfam" id="NF003720">
    <property type="entry name" value="PRK05329.1-3"/>
    <property type="match status" value="1"/>
</dbReference>
<dbReference type="PANTHER" id="PTHR43400:SF11">
    <property type="entry name" value="ANAEROBIC GLYCEROL-3-PHOSPHATE DEHYDROGENASE SUBUNIT B"/>
    <property type="match status" value="1"/>
</dbReference>
<dbReference type="PANTHER" id="PTHR43400">
    <property type="entry name" value="FUMARATE REDUCTASE"/>
    <property type="match status" value="1"/>
</dbReference>
<dbReference type="Pfam" id="PF00890">
    <property type="entry name" value="FAD_binding_2"/>
    <property type="match status" value="1"/>
</dbReference>
<dbReference type="PIRSF" id="PIRSF000141">
    <property type="entry name" value="Anaerobic_G3P_dh"/>
    <property type="match status" value="1"/>
</dbReference>
<dbReference type="SUPFAM" id="SSF51905">
    <property type="entry name" value="FAD/NAD(P)-binding domain"/>
    <property type="match status" value="1"/>
</dbReference>
<name>GLPB_ECO57</name>
<keyword id="KW-0997">Cell inner membrane</keyword>
<keyword id="KW-1003">Cell membrane</keyword>
<keyword id="KW-0285">Flavoprotein</keyword>
<keyword id="KW-0288">FMN</keyword>
<keyword id="KW-0472">Membrane</keyword>
<keyword id="KW-0560">Oxidoreductase</keyword>
<keyword id="KW-1185">Reference proteome</keyword>
<organism>
    <name type="scientific">Escherichia coli O157:H7</name>
    <dbReference type="NCBI Taxonomy" id="83334"/>
    <lineage>
        <taxon>Bacteria</taxon>
        <taxon>Pseudomonadati</taxon>
        <taxon>Pseudomonadota</taxon>
        <taxon>Gammaproteobacteria</taxon>
        <taxon>Enterobacterales</taxon>
        <taxon>Enterobacteriaceae</taxon>
        <taxon>Escherichia</taxon>
    </lineage>
</organism>
<protein>
    <recommendedName>
        <fullName evidence="2">Anaerobic glycerol-3-phosphate dehydrogenase subunit B</fullName>
        <shortName evidence="2">Anaerobic G-3-P dehydrogenase subunit B</shortName>
        <shortName evidence="2">Anaerobic G3Pdhase B</shortName>
        <ecNumber evidence="2">1.1.5.3</ecNumber>
    </recommendedName>
</protein>
<feature type="chain" id="PRO_0000204561" description="Anaerobic glycerol-3-phosphate dehydrogenase subunit B">
    <location>
        <begin position="1"/>
        <end position="419"/>
    </location>
</feature>
<gene>
    <name evidence="2" type="primary">glpB</name>
    <name type="ordered locus">Z3500</name>
    <name type="ordered locus">ECs3127</name>
</gene>
<comment type="function">
    <text evidence="2">Conversion of glycerol 3-phosphate to dihydroxyacetone. Uses fumarate or nitrate as electron acceptor.</text>
</comment>
<comment type="catalytic activity">
    <reaction evidence="2">
        <text>a quinone + sn-glycerol 3-phosphate = dihydroxyacetone phosphate + a quinol</text>
        <dbReference type="Rhea" id="RHEA:18977"/>
        <dbReference type="ChEBI" id="CHEBI:24646"/>
        <dbReference type="ChEBI" id="CHEBI:57597"/>
        <dbReference type="ChEBI" id="CHEBI:57642"/>
        <dbReference type="ChEBI" id="CHEBI:132124"/>
        <dbReference type="EC" id="1.1.5.3"/>
    </reaction>
</comment>
<comment type="cofactor">
    <cofactor evidence="2">
        <name>FMN</name>
        <dbReference type="ChEBI" id="CHEBI:58210"/>
    </cofactor>
</comment>
<comment type="pathway">
    <text evidence="2">Polyol metabolism; glycerol degradation via glycerol kinase pathway; glycerone phosphate from sn-glycerol 3-phosphate (anaerobic route): step 1/1.</text>
</comment>
<comment type="subunit">
    <text evidence="2">Composed of a catalytic GlpA/B dimer and of membrane bound GlpC.</text>
</comment>
<comment type="subcellular location">
    <subcellularLocation>
        <location evidence="1">Cell inner membrane</location>
        <topology evidence="1">Peripheral membrane protein</topology>
    </subcellularLocation>
    <text evidence="1">Loosely bound to the cytoplasmic membrane often occurring in vesicles associated with fumarate reductase.</text>
</comment>
<comment type="similarity">
    <text evidence="2">Belongs to the anaerobic G-3-P dehydrogenase subunit B family.</text>
</comment>
<reference key="1">
    <citation type="journal article" date="2001" name="Nature">
        <title>Genome sequence of enterohaemorrhagic Escherichia coli O157:H7.</title>
        <authorList>
            <person name="Perna N.T."/>
            <person name="Plunkett G. III"/>
            <person name="Burland V."/>
            <person name="Mau B."/>
            <person name="Glasner J.D."/>
            <person name="Rose D.J."/>
            <person name="Mayhew G.F."/>
            <person name="Evans P.S."/>
            <person name="Gregor J."/>
            <person name="Kirkpatrick H.A."/>
            <person name="Posfai G."/>
            <person name="Hackett J."/>
            <person name="Klink S."/>
            <person name="Boutin A."/>
            <person name="Shao Y."/>
            <person name="Miller L."/>
            <person name="Grotbeck E.J."/>
            <person name="Davis N.W."/>
            <person name="Lim A."/>
            <person name="Dimalanta E.T."/>
            <person name="Potamousis K."/>
            <person name="Apodaca J."/>
            <person name="Anantharaman T.S."/>
            <person name="Lin J."/>
            <person name="Yen G."/>
            <person name="Schwartz D.C."/>
            <person name="Welch R.A."/>
            <person name="Blattner F.R."/>
        </authorList>
    </citation>
    <scope>NUCLEOTIDE SEQUENCE [LARGE SCALE GENOMIC DNA]</scope>
    <source>
        <strain>O157:H7 / EDL933 / ATCC 700927 / EHEC</strain>
    </source>
</reference>
<reference key="2">
    <citation type="journal article" date="2001" name="DNA Res.">
        <title>Complete genome sequence of enterohemorrhagic Escherichia coli O157:H7 and genomic comparison with a laboratory strain K-12.</title>
        <authorList>
            <person name="Hayashi T."/>
            <person name="Makino K."/>
            <person name="Ohnishi M."/>
            <person name="Kurokawa K."/>
            <person name="Ishii K."/>
            <person name="Yokoyama K."/>
            <person name="Han C.-G."/>
            <person name="Ohtsubo E."/>
            <person name="Nakayama K."/>
            <person name="Murata T."/>
            <person name="Tanaka M."/>
            <person name="Tobe T."/>
            <person name="Iida T."/>
            <person name="Takami H."/>
            <person name="Honda T."/>
            <person name="Sasakawa C."/>
            <person name="Ogasawara N."/>
            <person name="Yasunaga T."/>
            <person name="Kuhara S."/>
            <person name="Shiba T."/>
            <person name="Hattori M."/>
            <person name="Shinagawa H."/>
        </authorList>
    </citation>
    <scope>NUCLEOTIDE SEQUENCE [LARGE SCALE GENOMIC DNA]</scope>
    <source>
        <strain>O157:H7 / Sakai / RIMD 0509952 / EHEC</strain>
    </source>
</reference>
<evidence type="ECO:0000250" key="1"/>
<evidence type="ECO:0000255" key="2">
    <source>
        <dbReference type="HAMAP-Rule" id="MF_00753"/>
    </source>
</evidence>